<reference key="1">
    <citation type="submission" date="2004-11" db="EMBL/GenBank/DDBJ databases">
        <authorList>
            <consortium name="The German cDNA consortium"/>
        </authorList>
    </citation>
    <scope>NUCLEOTIDE SEQUENCE [LARGE SCALE MRNA]</scope>
    <source>
        <tissue>Kidney</tissue>
    </source>
</reference>
<dbReference type="EMBL" id="CR859344">
    <property type="protein sequence ID" value="CAH91519.1"/>
    <property type="molecule type" value="mRNA"/>
</dbReference>
<dbReference type="EMBL" id="CR860185">
    <property type="protein sequence ID" value="CAH92327.1"/>
    <property type="molecule type" value="mRNA"/>
</dbReference>
<dbReference type="RefSeq" id="NP_001125893.1">
    <property type="nucleotide sequence ID" value="NM_001132421.2"/>
</dbReference>
<dbReference type="SMR" id="Q5R7D3"/>
<dbReference type="FunCoup" id="Q5R7D3">
    <property type="interactions" value="1794"/>
</dbReference>
<dbReference type="STRING" id="9601.ENSPPYP00000018408"/>
<dbReference type="Ensembl" id="ENSPPYT00000019143.2">
    <property type="protein sequence ID" value="ENSPPYP00000018408.1"/>
    <property type="gene ID" value="ENSPPYG00000016463.2"/>
</dbReference>
<dbReference type="GeneID" id="100172826"/>
<dbReference type="KEGG" id="pon:100172826"/>
<dbReference type="CTD" id="3303"/>
<dbReference type="eggNOG" id="KOG0101">
    <property type="taxonomic scope" value="Eukaryota"/>
</dbReference>
<dbReference type="GeneTree" id="ENSGT00940000161215"/>
<dbReference type="HOGENOM" id="CLU_005965_2_1_1"/>
<dbReference type="InParanoid" id="Q5R7D3"/>
<dbReference type="OMA" id="CNPIMTR"/>
<dbReference type="OrthoDB" id="9522975at2759"/>
<dbReference type="TreeFam" id="TF105042"/>
<dbReference type="Proteomes" id="UP000001595">
    <property type="component" value="Chromosome 6"/>
</dbReference>
<dbReference type="GO" id="GO:0005813">
    <property type="term" value="C:centrosome"/>
    <property type="evidence" value="ECO:0000250"/>
    <property type="project" value="UniProtKB"/>
</dbReference>
<dbReference type="GO" id="GO:0005737">
    <property type="term" value="C:cytoplasm"/>
    <property type="evidence" value="ECO:0007669"/>
    <property type="project" value="UniProtKB-SubCell"/>
</dbReference>
<dbReference type="GO" id="GO:0005634">
    <property type="term" value="C:nucleus"/>
    <property type="evidence" value="ECO:0007669"/>
    <property type="project" value="UniProtKB-SubCell"/>
</dbReference>
<dbReference type="GO" id="GO:0005524">
    <property type="term" value="F:ATP binding"/>
    <property type="evidence" value="ECO:0007669"/>
    <property type="project" value="UniProtKB-KW"/>
</dbReference>
<dbReference type="GO" id="GO:0140662">
    <property type="term" value="F:ATP-dependent protein folding chaperone"/>
    <property type="evidence" value="ECO:0007669"/>
    <property type="project" value="InterPro"/>
</dbReference>
<dbReference type="GO" id="GO:0090063">
    <property type="term" value="P:positive regulation of microtubule nucleation"/>
    <property type="evidence" value="ECO:0000250"/>
    <property type="project" value="UniProtKB"/>
</dbReference>
<dbReference type="GO" id="GO:0042026">
    <property type="term" value="P:protein refolding"/>
    <property type="evidence" value="ECO:0000250"/>
    <property type="project" value="UniProtKB"/>
</dbReference>
<dbReference type="GO" id="GO:1901673">
    <property type="term" value="P:regulation of mitotic spindle assembly"/>
    <property type="evidence" value="ECO:0000250"/>
    <property type="project" value="UniProtKB"/>
</dbReference>
<dbReference type="CDD" id="cd10233">
    <property type="entry name" value="ASKHA_NBD_HSP70_HSPA1"/>
    <property type="match status" value="1"/>
</dbReference>
<dbReference type="FunFam" id="2.60.34.10:FF:000002">
    <property type="entry name" value="Heat shock 70 kDa"/>
    <property type="match status" value="1"/>
</dbReference>
<dbReference type="FunFam" id="3.30.420.40:FF:000172">
    <property type="entry name" value="Heat shock 70 kDa protein"/>
    <property type="match status" value="1"/>
</dbReference>
<dbReference type="FunFam" id="3.30.30.30:FF:000001">
    <property type="entry name" value="heat shock 70 kDa protein-like"/>
    <property type="match status" value="1"/>
</dbReference>
<dbReference type="FunFam" id="3.30.420.40:FF:000028">
    <property type="entry name" value="heat shock 70 kDa protein-like"/>
    <property type="match status" value="1"/>
</dbReference>
<dbReference type="FunFam" id="3.30.420.40:FF:000135">
    <property type="entry name" value="Heat shock cognate 71 kDa protein"/>
    <property type="match status" value="1"/>
</dbReference>
<dbReference type="FunFam" id="3.90.640.10:FF:000134">
    <property type="entry name" value="Heat shock cognate 71 kDa protein"/>
    <property type="match status" value="1"/>
</dbReference>
<dbReference type="FunFam" id="1.20.1270.10:FF:000003">
    <property type="entry name" value="heat shock cognate 71 kDa protein-like"/>
    <property type="match status" value="1"/>
</dbReference>
<dbReference type="FunFam" id="3.30.420.40:FF:000026">
    <property type="entry name" value="Heat shock protein 70"/>
    <property type="match status" value="1"/>
</dbReference>
<dbReference type="Gene3D" id="1.20.1270.10">
    <property type="match status" value="1"/>
</dbReference>
<dbReference type="Gene3D" id="3.30.30.30">
    <property type="match status" value="1"/>
</dbReference>
<dbReference type="Gene3D" id="3.30.420.40">
    <property type="match status" value="2"/>
</dbReference>
<dbReference type="Gene3D" id="3.90.640.10">
    <property type="entry name" value="Actin, Chain A, domain 4"/>
    <property type="match status" value="1"/>
</dbReference>
<dbReference type="Gene3D" id="2.60.34.10">
    <property type="entry name" value="Substrate Binding Domain Of DNAk, Chain A, domain 1"/>
    <property type="match status" value="1"/>
</dbReference>
<dbReference type="InterPro" id="IPR043129">
    <property type="entry name" value="ATPase_NBD"/>
</dbReference>
<dbReference type="InterPro" id="IPR018181">
    <property type="entry name" value="Heat_shock_70_CS"/>
</dbReference>
<dbReference type="InterPro" id="IPR029048">
    <property type="entry name" value="HSP70_C_sf"/>
</dbReference>
<dbReference type="InterPro" id="IPR029047">
    <property type="entry name" value="HSP70_peptide-bd_sf"/>
</dbReference>
<dbReference type="InterPro" id="IPR013126">
    <property type="entry name" value="Hsp_70_fam"/>
</dbReference>
<dbReference type="NCBIfam" id="NF001413">
    <property type="entry name" value="PRK00290.1"/>
    <property type="match status" value="1"/>
</dbReference>
<dbReference type="PANTHER" id="PTHR19375">
    <property type="entry name" value="HEAT SHOCK PROTEIN 70KDA"/>
    <property type="match status" value="1"/>
</dbReference>
<dbReference type="Pfam" id="PF00012">
    <property type="entry name" value="HSP70"/>
    <property type="match status" value="1"/>
</dbReference>
<dbReference type="PRINTS" id="PR00301">
    <property type="entry name" value="HEATSHOCK70"/>
</dbReference>
<dbReference type="SUPFAM" id="SSF53067">
    <property type="entry name" value="Actin-like ATPase domain"/>
    <property type="match status" value="2"/>
</dbReference>
<dbReference type="SUPFAM" id="SSF100934">
    <property type="entry name" value="Heat shock protein 70kD (HSP70), C-terminal subdomain"/>
    <property type="match status" value="1"/>
</dbReference>
<dbReference type="SUPFAM" id="SSF100920">
    <property type="entry name" value="Heat shock protein 70kD (HSP70), peptide-binding domain"/>
    <property type="match status" value="1"/>
</dbReference>
<dbReference type="PROSITE" id="PS00297">
    <property type="entry name" value="HSP70_1"/>
    <property type="match status" value="1"/>
</dbReference>
<dbReference type="PROSITE" id="PS00329">
    <property type="entry name" value="HSP70_2"/>
    <property type="match status" value="1"/>
</dbReference>
<dbReference type="PROSITE" id="PS01036">
    <property type="entry name" value="HSP70_3"/>
    <property type="match status" value="1"/>
</dbReference>
<gene>
    <name type="primary">HSPA1</name>
</gene>
<proteinExistence type="evidence at transcript level"/>
<organism>
    <name type="scientific">Pongo abelii</name>
    <name type="common">Sumatran orangutan</name>
    <name type="synonym">Pongo pygmaeus abelii</name>
    <dbReference type="NCBI Taxonomy" id="9601"/>
    <lineage>
        <taxon>Eukaryota</taxon>
        <taxon>Metazoa</taxon>
        <taxon>Chordata</taxon>
        <taxon>Craniata</taxon>
        <taxon>Vertebrata</taxon>
        <taxon>Euteleostomi</taxon>
        <taxon>Mammalia</taxon>
        <taxon>Eutheria</taxon>
        <taxon>Euarchontoglires</taxon>
        <taxon>Primates</taxon>
        <taxon>Haplorrhini</taxon>
        <taxon>Catarrhini</taxon>
        <taxon>Hominidae</taxon>
        <taxon>Pongo</taxon>
    </lineage>
</organism>
<evidence type="ECO:0000250" key="1"/>
<evidence type="ECO:0000250" key="2">
    <source>
        <dbReference type="UniProtKB" id="P0DMV8"/>
    </source>
</evidence>
<evidence type="ECO:0000250" key="3">
    <source>
        <dbReference type="UniProtKB" id="P11142"/>
    </source>
</evidence>
<evidence type="ECO:0000256" key="4">
    <source>
        <dbReference type="SAM" id="MobiDB-lite"/>
    </source>
</evidence>
<evidence type="ECO:0000305" key="5"/>
<comment type="function">
    <text evidence="2">Molecular chaperone implicated in a wide variety of cellular processes, including protection of the proteome from stress, folding and transport of newly synthesized polypeptides, activation of proteolysis of misfolded proteins and the formation and dissociation of protein complexes. Plays a pivotal role in the protein quality control system, ensuring the correct folding of proteins, the re-folding of misfolded proteins and controlling the targeting of proteins for subsequent degradation. This is achieved through cycles of ATP binding, ATP hydrolysis and ADP release, mediated by co-chaperones. The co-chaperones have been shown to not only regulate different steps of the ATPase cycle, but they also have an individual specificity such that one co-chaperone may promote folding of a substrate while another may promote degradation. The affinity for polypeptides is regulated by its nucleotide bound state. In the ATP-bound form, it has a low affinity for substrate proteins. However, upon hydrolysis of the ATP to ADP, it undergoes a conformational change that increases its affinity for substrate proteins. It goes through repeated cycles of ATP hydrolysis and nucleotide exchange, which permits cycles of substrate binding and release. The co-chaperones are of three types: J-domain co-chaperones such as HSP40s (stimulate ATPase hydrolysis by HSP70), the nucleotide exchange factors (NEF) such as BAG1/2/3 (facilitate conversion of HSP70 from the ADP-bound to the ATP-bound state thereby promoting substrate release), and the TPR domain chaperones such as HOPX and STUB1. Maintains protein homeostasis during cellular stress through two opposing mechanisms: protein refolding and degradation. Its acetylation/deacetylation state determines whether it functions in protein refolding or protein degradation by controlling the competitive binding of co-chaperones HOPX and STUB1. During the early stress response, the acetylated form binds to HOPX which assists in chaperone-mediated protein refolding, thereafter, it is deacetylated and binds to ubiquitin ligase STUB1 that promotes ubiquitin-mediated protein degradation. Regulates centrosome integrity during mitosis, and is required for the maintenance of a functional mitotic centrosome that supports the assembly of a bipolar mitotic spindle. Enhances STUB1-mediated SMAD3 ubiquitination and degradation and facilitates STUB1-mediated inhibition of TGF-beta signaling. Essential for STUB1-mediated ubiquitination and degradation of FOXP3 in regulatory T-cells (Treg) during inflammation.</text>
</comment>
<comment type="subunit">
    <text evidence="2">Component of the CatSper complex (By similarity). Identified in a IGF2BP1-dependent mRNP granule complex containing untranslated mRNAs. Interacts with CHCHD3, DNAJC7, IRAK1BP1, PPP5C and TSC2. Interacts with TERT; the interaction occurs in the absence of the RNA component, TERC, and dissociates once the TERT complex has formed. Interacts with TRIM5 (via B30.2/SPRY domain). Interacts with PRKN. Interacts with FOXP3. Interacts with DNAJC9 (via J domain). Interacts with NAA10, HSP40, HSP90 and HDAC4. The acetylated form and the non-acetylated form interact with HOPX and STUB1 respectively. Interacts with NEDD1 and SMAD3. Interacts (via NBD) with BAG1, BAG2, BAG3 and HSPH1/HSP105. Interacts with DNAJC8.</text>
</comment>
<comment type="subcellular location">
    <subcellularLocation>
        <location evidence="2">Cytoplasm</location>
    </subcellularLocation>
    <subcellularLocation>
        <location evidence="2">Nucleus</location>
    </subcellularLocation>
    <subcellularLocation>
        <location evidence="2">Cytoplasm</location>
        <location evidence="2">Cytoskeleton</location>
        <location evidence="2">Microtubule organizing center</location>
        <location evidence="2">Centrosome</location>
    </subcellularLocation>
    <text evidence="2">Localized in cytoplasmic mRNP granules containing untranslated mRNAs.</text>
</comment>
<comment type="domain">
    <text evidence="2">The N-terminal nucleotide binding domain (NBD) (also known as the ATPase domain) is responsible for binding and hydrolyzing ATP. The C-terminal substrate-binding domain (SBD) (also known as peptide-binding domain) binds to the client/substrate proteins. The two domains are allosterically coupled so that, when ATP is bound to the NBD, the SBD binds relatively weakly to clients. When ADP is bound in the NBD, a conformational change enhances the affinity of the SBD for client proteins.</text>
</comment>
<comment type="PTM">
    <text evidence="2">In response to cellular stress, acetylated at Lys-77 by NA110 and then gradually deacetylated by HDAC4 at later stages. Acetylation enhances its chaperone activity and also determines whether it will function as a chaperone for protein refolding or degradation by controlling its binding to co-chaperones HOPX and STUB1. The acetylated form and the non-acetylated form bind to HOPX and STUB1 respectively. Acetylation also protects cells against various types of cellular stress.</text>
</comment>
<comment type="similarity">
    <text evidence="5">Belongs to the heat shock protein 70 family.</text>
</comment>
<feature type="initiator methionine" description="Removed" evidence="2">
    <location>
        <position position="1"/>
    </location>
</feature>
<feature type="chain" id="PRO_0000314292" description="Heat shock 70 kDa protein 1">
    <location>
        <begin position="2"/>
        <end position="641"/>
    </location>
</feature>
<feature type="region of interest" description="Nucleotide-binding domain (NBD)" evidence="3">
    <location>
        <begin position="2"/>
        <end position="386"/>
    </location>
</feature>
<feature type="region of interest" description="Substrate-binding domain (SBD)" evidence="3">
    <location>
        <begin position="394"/>
        <end position="509"/>
    </location>
</feature>
<feature type="region of interest" description="Disordered" evidence="4">
    <location>
        <begin position="614"/>
        <end position="641"/>
    </location>
</feature>
<feature type="compositionally biased region" description="Gly residues" evidence="4">
    <location>
        <begin position="614"/>
        <end position="633"/>
    </location>
</feature>
<feature type="binding site" evidence="1">
    <location>
        <begin position="12"/>
        <end position="15"/>
    </location>
    <ligand>
        <name>ATP</name>
        <dbReference type="ChEBI" id="CHEBI:30616"/>
    </ligand>
</feature>
<feature type="binding site" evidence="1">
    <location>
        <position position="71"/>
    </location>
    <ligand>
        <name>ATP</name>
        <dbReference type="ChEBI" id="CHEBI:30616"/>
    </ligand>
</feature>
<feature type="binding site" evidence="1">
    <location>
        <begin position="202"/>
        <end position="204"/>
    </location>
    <ligand>
        <name>ATP</name>
        <dbReference type="ChEBI" id="CHEBI:30616"/>
    </ligand>
</feature>
<feature type="binding site" evidence="1">
    <location>
        <begin position="268"/>
        <end position="275"/>
    </location>
    <ligand>
        <name>ATP</name>
        <dbReference type="ChEBI" id="CHEBI:30616"/>
    </ligand>
</feature>
<feature type="binding site" evidence="1">
    <location>
        <begin position="339"/>
        <end position="342"/>
    </location>
    <ligand>
        <name>ATP</name>
        <dbReference type="ChEBI" id="CHEBI:30616"/>
    </ligand>
</feature>
<feature type="modified residue" description="N-acetylalanine" evidence="2">
    <location>
        <position position="2"/>
    </location>
</feature>
<feature type="modified residue" description="N6-acetyllysine" evidence="2">
    <location>
        <position position="77"/>
    </location>
</feature>
<feature type="modified residue" description="N6-acetyllysine" evidence="2">
    <location>
        <position position="108"/>
    </location>
</feature>
<feature type="modified residue" description="N6-acetyllysine" evidence="2">
    <location>
        <position position="246"/>
    </location>
</feature>
<feature type="modified residue" description="N6-acetyllysine" evidence="2">
    <location>
        <position position="348"/>
    </location>
</feature>
<feature type="modified residue" description="Omega-N-methylarginine" evidence="2">
    <location>
        <position position="469"/>
    </location>
</feature>
<feature type="modified residue" description="N6,N6,N6-trimethyllysine; by METTL21A; alternate" evidence="2">
    <location>
        <position position="561"/>
    </location>
</feature>
<feature type="modified residue" description="N6,N6-dimethyllysine; alternate" evidence="2">
    <location>
        <position position="561"/>
    </location>
</feature>
<feature type="modified residue" description="Phosphoserine" evidence="2">
    <location>
        <position position="631"/>
    </location>
</feature>
<feature type="modified residue" description="Phosphoserine" evidence="2">
    <location>
        <position position="633"/>
    </location>
</feature>
<feature type="modified residue" description="Phosphothreonine" evidence="2">
    <location>
        <position position="636"/>
    </location>
</feature>
<feature type="sequence conflict" description="In Ref. 1; CAH91519." evidence="5" ref="1">
    <original>I</original>
    <variation>N</variation>
    <location>
        <position position="95"/>
    </location>
</feature>
<feature type="sequence conflict" description="In Ref. 1; CAH91519." evidence="5" ref="1">
    <original>L</original>
    <variation>P</variation>
    <location>
        <position position="461"/>
    </location>
</feature>
<protein>
    <recommendedName>
        <fullName>Heat shock 70 kDa protein 1</fullName>
    </recommendedName>
</protein>
<sequence length="641" mass="70052">MAKAAAIGIDLGTTYSCVGVFQHGKVEIIANDQGNRTTPSYVAFTDTERLIGDAAKNQVALNPQNTVFDAKRLIGRKFGDPVVQSDMKHWPFQVINDGDKPKVQVSYKGETKAFYPEEISSMVLTKMKEIAEAYLGYPVTNAVITVPAYFNDSQRQATKDAGVIAGLNVLRIINEPTAAAIAYGLDRTGKGERNVLIFDLGGGTFDVSILTIDDGIFEVKATAGDTHLGGEDFDNRLVNHFVEEFKRKHKKDISQNKRAVRRLRTACERAKRTLSSSTQASLEIDSLFEGIDFYTSITRARFEELCSDLFRSTLEPVEKALRDAKLDKAQIHDLVLVGGSTRIPKVQKLLQDFFNGRDLNKSINPDEAVAYGAAVQAAILMGDKSENVQDLLLLDVAPLSLGLETAGGVMTALIKRNSTIPTKQTQIFTTYSDNQPGVLIQVYEGERAMTKDNNLLGRFELSGIPPAPRGVPQIEVTFDIDANGILNVTATDKSTGKANKITITNDKGRLSKEEIERMVQEAEKYKAEDEVQRERVSAKNALESYAFNMKSAVEDEGLKGKISEADKKKVLDKCQEVISWLDANTLAEKDEFEHKRKELEQVCNPIISGLYQGAGGPGPGGFGAQGPKGGSGSGPTIEEVD</sequence>
<keyword id="KW-0007">Acetylation</keyword>
<keyword id="KW-0067">ATP-binding</keyword>
<keyword id="KW-0143">Chaperone</keyword>
<keyword id="KW-0963">Cytoplasm</keyword>
<keyword id="KW-0206">Cytoskeleton</keyword>
<keyword id="KW-0488">Methylation</keyword>
<keyword id="KW-0547">Nucleotide-binding</keyword>
<keyword id="KW-0539">Nucleus</keyword>
<keyword id="KW-0597">Phosphoprotein</keyword>
<keyword id="KW-1185">Reference proteome</keyword>
<keyword id="KW-0346">Stress response</keyword>
<name>HSP71_PONAB</name>
<accession>Q5R7D3</accession>
<accession>Q5R9P1</accession>